<sequence length="132" mass="14892">MSMTDNVADMLTRIRNAYKSKLINVSFPSSKIKTSILDVLQKEGYIKDYIITHKNNISYTEVALKYSVNGDASICEIHRVSKPGKRVYSAIKDLKGYYNNMGIYILSTPYGVMSDREAHIKNVGGEVICKVF</sequence>
<organism>
    <name type="scientific">Rickettsia canadensis (strain McKiel)</name>
    <dbReference type="NCBI Taxonomy" id="293613"/>
    <lineage>
        <taxon>Bacteria</taxon>
        <taxon>Pseudomonadati</taxon>
        <taxon>Pseudomonadota</taxon>
        <taxon>Alphaproteobacteria</taxon>
        <taxon>Rickettsiales</taxon>
        <taxon>Rickettsiaceae</taxon>
        <taxon>Rickettsieae</taxon>
        <taxon>Rickettsia</taxon>
        <taxon>belli group</taxon>
    </lineage>
</organism>
<name>RS8_RICCK</name>
<reference key="1">
    <citation type="submission" date="2007-09" db="EMBL/GenBank/DDBJ databases">
        <title>Complete genome sequence of Rickettsia canadensis.</title>
        <authorList>
            <person name="Madan A."/>
            <person name="Fahey J."/>
            <person name="Helton E."/>
            <person name="Ketteman M."/>
            <person name="Madan A."/>
            <person name="Rodrigues S."/>
            <person name="Sanchez A."/>
            <person name="Whiting M."/>
            <person name="Dasch G."/>
            <person name="Eremeeva M."/>
        </authorList>
    </citation>
    <scope>NUCLEOTIDE SEQUENCE [LARGE SCALE GENOMIC DNA]</scope>
    <source>
        <strain>McKiel</strain>
    </source>
</reference>
<accession>A8EZK2</accession>
<comment type="function">
    <text evidence="1">One of the primary rRNA binding proteins, it binds directly to 16S rRNA central domain where it helps coordinate assembly of the platform of the 30S subunit.</text>
</comment>
<comment type="subunit">
    <text evidence="1">Part of the 30S ribosomal subunit. Contacts proteins S5 and S12.</text>
</comment>
<comment type="similarity">
    <text evidence="1">Belongs to the universal ribosomal protein uS8 family.</text>
</comment>
<keyword id="KW-0687">Ribonucleoprotein</keyword>
<keyword id="KW-0689">Ribosomal protein</keyword>
<keyword id="KW-0694">RNA-binding</keyword>
<keyword id="KW-0699">rRNA-binding</keyword>
<proteinExistence type="inferred from homology"/>
<protein>
    <recommendedName>
        <fullName evidence="1">Small ribosomal subunit protein uS8</fullName>
    </recommendedName>
    <alternativeName>
        <fullName evidence="2">30S ribosomal protein S8</fullName>
    </alternativeName>
</protein>
<gene>
    <name evidence="1" type="primary">rpsH</name>
    <name type="ordered locus">A1E_04300</name>
</gene>
<evidence type="ECO:0000255" key="1">
    <source>
        <dbReference type="HAMAP-Rule" id="MF_01302"/>
    </source>
</evidence>
<evidence type="ECO:0000305" key="2"/>
<dbReference type="EMBL" id="CP000409">
    <property type="protein sequence ID" value="ABV73785.1"/>
    <property type="molecule type" value="Genomic_DNA"/>
</dbReference>
<dbReference type="RefSeq" id="WP_012148980.1">
    <property type="nucleotide sequence ID" value="NC_009879.1"/>
</dbReference>
<dbReference type="SMR" id="A8EZK2"/>
<dbReference type="STRING" id="293613.A1E_04300"/>
<dbReference type="KEGG" id="rcm:A1E_04300"/>
<dbReference type="eggNOG" id="COG0096">
    <property type="taxonomic scope" value="Bacteria"/>
</dbReference>
<dbReference type="HOGENOM" id="CLU_098428_0_0_5"/>
<dbReference type="Proteomes" id="UP000007056">
    <property type="component" value="Chromosome"/>
</dbReference>
<dbReference type="GO" id="GO:1990904">
    <property type="term" value="C:ribonucleoprotein complex"/>
    <property type="evidence" value="ECO:0007669"/>
    <property type="project" value="UniProtKB-KW"/>
</dbReference>
<dbReference type="GO" id="GO:0005840">
    <property type="term" value="C:ribosome"/>
    <property type="evidence" value="ECO:0007669"/>
    <property type="project" value="UniProtKB-KW"/>
</dbReference>
<dbReference type="GO" id="GO:0019843">
    <property type="term" value="F:rRNA binding"/>
    <property type="evidence" value="ECO:0007669"/>
    <property type="project" value="UniProtKB-UniRule"/>
</dbReference>
<dbReference type="GO" id="GO:0003735">
    <property type="term" value="F:structural constituent of ribosome"/>
    <property type="evidence" value="ECO:0007669"/>
    <property type="project" value="InterPro"/>
</dbReference>
<dbReference type="GO" id="GO:0006412">
    <property type="term" value="P:translation"/>
    <property type="evidence" value="ECO:0007669"/>
    <property type="project" value="UniProtKB-UniRule"/>
</dbReference>
<dbReference type="FunFam" id="3.30.1370.30:FF:000002">
    <property type="entry name" value="30S ribosomal protein S8"/>
    <property type="match status" value="1"/>
</dbReference>
<dbReference type="FunFam" id="3.30.1490.10:FF:000001">
    <property type="entry name" value="30S ribosomal protein S8"/>
    <property type="match status" value="1"/>
</dbReference>
<dbReference type="Gene3D" id="3.30.1370.30">
    <property type="match status" value="1"/>
</dbReference>
<dbReference type="Gene3D" id="3.30.1490.10">
    <property type="match status" value="1"/>
</dbReference>
<dbReference type="HAMAP" id="MF_01302_B">
    <property type="entry name" value="Ribosomal_uS8_B"/>
    <property type="match status" value="1"/>
</dbReference>
<dbReference type="InterPro" id="IPR000630">
    <property type="entry name" value="Ribosomal_uS8"/>
</dbReference>
<dbReference type="InterPro" id="IPR047863">
    <property type="entry name" value="Ribosomal_uS8_CS"/>
</dbReference>
<dbReference type="InterPro" id="IPR035987">
    <property type="entry name" value="Ribosomal_uS8_sf"/>
</dbReference>
<dbReference type="NCBIfam" id="NF001109">
    <property type="entry name" value="PRK00136.1"/>
    <property type="match status" value="1"/>
</dbReference>
<dbReference type="PANTHER" id="PTHR11758">
    <property type="entry name" value="40S RIBOSOMAL PROTEIN S15A"/>
    <property type="match status" value="1"/>
</dbReference>
<dbReference type="Pfam" id="PF00410">
    <property type="entry name" value="Ribosomal_S8"/>
    <property type="match status" value="1"/>
</dbReference>
<dbReference type="SUPFAM" id="SSF56047">
    <property type="entry name" value="Ribosomal protein S8"/>
    <property type="match status" value="1"/>
</dbReference>
<dbReference type="PROSITE" id="PS00053">
    <property type="entry name" value="RIBOSOMAL_S8"/>
    <property type="match status" value="1"/>
</dbReference>
<feature type="chain" id="PRO_1000051795" description="Small ribosomal subunit protein uS8">
    <location>
        <begin position="1"/>
        <end position="132"/>
    </location>
</feature>